<evidence type="ECO:0000255" key="1">
    <source>
        <dbReference type="HAMAP-Rule" id="MF_00169"/>
    </source>
</evidence>
<sequence length="147" mass="16323">MPHFLVLNGPNLNRLGKREPAVYGSKTLTDLETDLFQFAERANIQLTFFQSNHEGDLIDALHEAEEQYDGVVFNPGAFTHYSYALRDAIASISLSVVEVHISNVHKREEFRHHSVLAPVCQGQIVGLGLEGYKLAIRYLVSEGGAVS</sequence>
<name>AROQ_BACP2</name>
<feature type="chain" id="PRO_1000058293" description="3-dehydroquinate dehydratase">
    <location>
        <begin position="1"/>
        <end position="147"/>
    </location>
</feature>
<feature type="active site" description="Proton acceptor" evidence="1">
    <location>
        <position position="23"/>
    </location>
</feature>
<feature type="active site" description="Proton donor" evidence="1">
    <location>
        <position position="100"/>
    </location>
</feature>
<feature type="binding site" evidence="1">
    <location>
        <position position="74"/>
    </location>
    <ligand>
        <name>substrate</name>
    </ligand>
</feature>
<feature type="binding site" evidence="1">
    <location>
        <position position="80"/>
    </location>
    <ligand>
        <name>substrate</name>
    </ligand>
</feature>
<feature type="binding site" evidence="1">
    <location>
        <position position="87"/>
    </location>
    <ligand>
        <name>substrate</name>
    </ligand>
</feature>
<feature type="binding site" evidence="1">
    <location>
        <begin position="101"/>
        <end position="102"/>
    </location>
    <ligand>
        <name>substrate</name>
    </ligand>
</feature>
<feature type="binding site" evidence="1">
    <location>
        <position position="111"/>
    </location>
    <ligand>
        <name>substrate</name>
    </ligand>
</feature>
<feature type="site" description="Transition state stabilizer" evidence="1">
    <location>
        <position position="18"/>
    </location>
</feature>
<protein>
    <recommendedName>
        <fullName evidence="1">3-dehydroquinate dehydratase</fullName>
        <shortName evidence="1">3-dehydroquinase</shortName>
        <ecNumber evidence="1">4.2.1.10</ecNumber>
    </recommendedName>
    <alternativeName>
        <fullName evidence="1">Type II DHQase</fullName>
    </alternativeName>
</protein>
<keyword id="KW-0028">Amino-acid biosynthesis</keyword>
<keyword id="KW-0057">Aromatic amino acid biosynthesis</keyword>
<keyword id="KW-0456">Lyase</keyword>
<reference key="1">
    <citation type="journal article" date="2007" name="PLoS ONE">
        <title>Paradoxical DNA repair and peroxide resistance gene conservation in Bacillus pumilus SAFR-032.</title>
        <authorList>
            <person name="Gioia J."/>
            <person name="Yerrapragada S."/>
            <person name="Qin X."/>
            <person name="Jiang H."/>
            <person name="Igboeli O.C."/>
            <person name="Muzny D."/>
            <person name="Dugan-Rocha S."/>
            <person name="Ding Y."/>
            <person name="Hawes A."/>
            <person name="Liu W."/>
            <person name="Perez L."/>
            <person name="Kovar C."/>
            <person name="Dinh H."/>
            <person name="Lee S."/>
            <person name="Nazareth L."/>
            <person name="Blyth P."/>
            <person name="Holder M."/>
            <person name="Buhay C."/>
            <person name="Tirumalai M.R."/>
            <person name="Liu Y."/>
            <person name="Dasgupta I."/>
            <person name="Bokhetache L."/>
            <person name="Fujita M."/>
            <person name="Karouia F."/>
            <person name="Eswara Moorthy P."/>
            <person name="Siefert J."/>
            <person name="Uzman A."/>
            <person name="Buzumbo P."/>
            <person name="Verma A."/>
            <person name="Zwiya H."/>
            <person name="McWilliams B.D."/>
            <person name="Olowu A."/>
            <person name="Clinkenbeard K.D."/>
            <person name="Newcombe D."/>
            <person name="Golebiewski L."/>
            <person name="Petrosino J.F."/>
            <person name="Nicholson W.L."/>
            <person name="Fox G.E."/>
            <person name="Venkateswaran K."/>
            <person name="Highlander S.K."/>
            <person name="Weinstock G.M."/>
        </authorList>
    </citation>
    <scope>NUCLEOTIDE SEQUENCE [LARGE SCALE GENOMIC DNA]</scope>
    <source>
        <strain>SAFR-032</strain>
    </source>
</reference>
<comment type="function">
    <text evidence="1">Catalyzes a trans-dehydration via an enolate intermediate.</text>
</comment>
<comment type="catalytic activity">
    <reaction evidence="1">
        <text>3-dehydroquinate = 3-dehydroshikimate + H2O</text>
        <dbReference type="Rhea" id="RHEA:21096"/>
        <dbReference type="ChEBI" id="CHEBI:15377"/>
        <dbReference type="ChEBI" id="CHEBI:16630"/>
        <dbReference type="ChEBI" id="CHEBI:32364"/>
        <dbReference type="EC" id="4.2.1.10"/>
    </reaction>
</comment>
<comment type="pathway">
    <text evidence="1">Metabolic intermediate biosynthesis; chorismate biosynthesis; chorismate from D-erythrose 4-phosphate and phosphoenolpyruvate: step 3/7.</text>
</comment>
<comment type="subunit">
    <text evidence="1">Homododecamer.</text>
</comment>
<comment type="similarity">
    <text evidence="1">Belongs to the type-II 3-dehydroquinase family.</text>
</comment>
<dbReference type="EC" id="4.2.1.10" evidence="1"/>
<dbReference type="EMBL" id="CP000813">
    <property type="protein sequence ID" value="ABV62848.1"/>
    <property type="molecule type" value="Genomic_DNA"/>
</dbReference>
<dbReference type="RefSeq" id="WP_012010543.1">
    <property type="nucleotide sequence ID" value="NZ_VEIS01000005.1"/>
</dbReference>
<dbReference type="SMR" id="A8FF31"/>
<dbReference type="STRING" id="315750.BPUM_2179"/>
<dbReference type="GeneID" id="5621445"/>
<dbReference type="KEGG" id="bpu:BPUM_2179"/>
<dbReference type="eggNOG" id="COG0757">
    <property type="taxonomic scope" value="Bacteria"/>
</dbReference>
<dbReference type="HOGENOM" id="CLU_090968_3_0_9"/>
<dbReference type="OrthoDB" id="9790793at2"/>
<dbReference type="UniPathway" id="UPA00053">
    <property type="reaction ID" value="UER00086"/>
</dbReference>
<dbReference type="Proteomes" id="UP000001355">
    <property type="component" value="Chromosome"/>
</dbReference>
<dbReference type="GO" id="GO:0003855">
    <property type="term" value="F:3-dehydroquinate dehydratase activity"/>
    <property type="evidence" value="ECO:0007669"/>
    <property type="project" value="UniProtKB-UniRule"/>
</dbReference>
<dbReference type="GO" id="GO:0008652">
    <property type="term" value="P:amino acid biosynthetic process"/>
    <property type="evidence" value="ECO:0007669"/>
    <property type="project" value="UniProtKB-KW"/>
</dbReference>
<dbReference type="GO" id="GO:0009073">
    <property type="term" value="P:aromatic amino acid family biosynthetic process"/>
    <property type="evidence" value="ECO:0007669"/>
    <property type="project" value="UniProtKB-KW"/>
</dbReference>
<dbReference type="GO" id="GO:0009423">
    <property type="term" value="P:chorismate biosynthetic process"/>
    <property type="evidence" value="ECO:0007669"/>
    <property type="project" value="UniProtKB-UniRule"/>
</dbReference>
<dbReference type="GO" id="GO:0019631">
    <property type="term" value="P:quinate catabolic process"/>
    <property type="evidence" value="ECO:0007669"/>
    <property type="project" value="TreeGrafter"/>
</dbReference>
<dbReference type="CDD" id="cd00466">
    <property type="entry name" value="DHQase_II"/>
    <property type="match status" value="1"/>
</dbReference>
<dbReference type="Gene3D" id="3.40.50.9100">
    <property type="entry name" value="Dehydroquinase, class II"/>
    <property type="match status" value="1"/>
</dbReference>
<dbReference type="HAMAP" id="MF_00169">
    <property type="entry name" value="AroQ"/>
    <property type="match status" value="1"/>
</dbReference>
<dbReference type="InterPro" id="IPR001874">
    <property type="entry name" value="DHquinase_II"/>
</dbReference>
<dbReference type="InterPro" id="IPR018509">
    <property type="entry name" value="DHquinase_II_CS"/>
</dbReference>
<dbReference type="InterPro" id="IPR036441">
    <property type="entry name" value="DHquinase_II_sf"/>
</dbReference>
<dbReference type="NCBIfam" id="TIGR01088">
    <property type="entry name" value="aroQ"/>
    <property type="match status" value="1"/>
</dbReference>
<dbReference type="NCBIfam" id="NF003805">
    <property type="entry name" value="PRK05395.1-2"/>
    <property type="match status" value="1"/>
</dbReference>
<dbReference type="NCBIfam" id="NF003806">
    <property type="entry name" value="PRK05395.1-3"/>
    <property type="match status" value="1"/>
</dbReference>
<dbReference type="NCBIfam" id="NF003807">
    <property type="entry name" value="PRK05395.1-4"/>
    <property type="match status" value="1"/>
</dbReference>
<dbReference type="PANTHER" id="PTHR21272">
    <property type="entry name" value="CATABOLIC 3-DEHYDROQUINASE"/>
    <property type="match status" value="1"/>
</dbReference>
<dbReference type="PANTHER" id="PTHR21272:SF3">
    <property type="entry name" value="CATABOLIC 3-DEHYDROQUINASE"/>
    <property type="match status" value="1"/>
</dbReference>
<dbReference type="Pfam" id="PF01220">
    <property type="entry name" value="DHquinase_II"/>
    <property type="match status" value="1"/>
</dbReference>
<dbReference type="PIRSF" id="PIRSF001399">
    <property type="entry name" value="DHquinase_II"/>
    <property type="match status" value="1"/>
</dbReference>
<dbReference type="SUPFAM" id="SSF52304">
    <property type="entry name" value="Type II 3-dehydroquinate dehydratase"/>
    <property type="match status" value="1"/>
</dbReference>
<dbReference type="PROSITE" id="PS01029">
    <property type="entry name" value="DEHYDROQUINASE_II"/>
    <property type="match status" value="1"/>
</dbReference>
<gene>
    <name evidence="1" type="primary">aroQ</name>
    <name type="ordered locus">BPUM_2179</name>
</gene>
<organism>
    <name type="scientific">Bacillus pumilus (strain SAFR-032)</name>
    <dbReference type="NCBI Taxonomy" id="315750"/>
    <lineage>
        <taxon>Bacteria</taxon>
        <taxon>Bacillati</taxon>
        <taxon>Bacillota</taxon>
        <taxon>Bacilli</taxon>
        <taxon>Bacillales</taxon>
        <taxon>Bacillaceae</taxon>
        <taxon>Bacillus</taxon>
    </lineage>
</organism>
<accession>A8FF31</accession>
<proteinExistence type="inferred from homology"/>